<protein>
    <recommendedName>
        <fullName evidence="2">N(4)-acetylcytidine amidohydrolase</fullName>
        <shortName evidence="2">ac4C amidohydrolase</shortName>
        <ecNumber evidence="2">3.5.1.135</ecNumber>
    </recommendedName>
</protein>
<dbReference type="EC" id="3.5.1.135" evidence="2"/>
<dbReference type="EMBL" id="CP000800">
    <property type="protein sequence ID" value="ABV20660.1"/>
    <property type="molecule type" value="Genomic_DNA"/>
</dbReference>
<dbReference type="RefSeq" id="WP_001182954.1">
    <property type="nucleotide sequence ID" value="NC_009801.1"/>
</dbReference>
<dbReference type="BMRB" id="A7ZR09"/>
<dbReference type="SMR" id="A7ZR09"/>
<dbReference type="GeneID" id="93779102"/>
<dbReference type="KEGG" id="ecw:EcE24377A_3227"/>
<dbReference type="HOGENOM" id="CLU_152586_0_0_6"/>
<dbReference type="Proteomes" id="UP000001122">
    <property type="component" value="Chromosome"/>
</dbReference>
<dbReference type="GO" id="GO:0005829">
    <property type="term" value="C:cytosol"/>
    <property type="evidence" value="ECO:0007669"/>
    <property type="project" value="TreeGrafter"/>
</dbReference>
<dbReference type="GO" id="GO:0016813">
    <property type="term" value="F:hydrolase activity, acting on carbon-nitrogen (but not peptide) bonds, in linear amidines"/>
    <property type="evidence" value="ECO:0007669"/>
    <property type="project" value="UniProtKB-UniRule"/>
</dbReference>
<dbReference type="GO" id="GO:0106251">
    <property type="term" value="F:N4-acetylcytidine amidohydrolase activity"/>
    <property type="evidence" value="ECO:0007669"/>
    <property type="project" value="RHEA"/>
</dbReference>
<dbReference type="CDD" id="cd06552">
    <property type="entry name" value="ASCH_yqfb_like"/>
    <property type="match status" value="1"/>
</dbReference>
<dbReference type="FunFam" id="2.30.130.30:FF:000001">
    <property type="entry name" value="UPF0267 protein YqfB"/>
    <property type="match status" value="1"/>
</dbReference>
<dbReference type="Gene3D" id="2.30.130.30">
    <property type="entry name" value="Hypothetical protein"/>
    <property type="match status" value="1"/>
</dbReference>
<dbReference type="HAMAP" id="MF_00684">
    <property type="entry name" value="ac4C_amidohydr"/>
    <property type="match status" value="1"/>
</dbReference>
<dbReference type="InterPro" id="IPR008314">
    <property type="entry name" value="AC4CH"/>
</dbReference>
<dbReference type="InterPro" id="IPR007374">
    <property type="entry name" value="ASCH_domain"/>
</dbReference>
<dbReference type="InterPro" id="IPR015947">
    <property type="entry name" value="PUA-like_sf"/>
</dbReference>
<dbReference type="NCBIfam" id="NF003443">
    <property type="entry name" value="PRK04980.1"/>
    <property type="match status" value="1"/>
</dbReference>
<dbReference type="PANTHER" id="PTHR38088">
    <property type="entry name" value="UCP029143 FAMILY PROTEIN"/>
    <property type="match status" value="1"/>
</dbReference>
<dbReference type="PANTHER" id="PTHR38088:SF2">
    <property type="entry name" value="UCP029143 FAMILY PROTEIN"/>
    <property type="match status" value="1"/>
</dbReference>
<dbReference type="Pfam" id="PF04266">
    <property type="entry name" value="ASCH"/>
    <property type="match status" value="1"/>
</dbReference>
<dbReference type="PIRSF" id="PIRSF029143">
    <property type="entry name" value="UCP029143"/>
    <property type="match status" value="1"/>
</dbReference>
<dbReference type="SMART" id="SM01022">
    <property type="entry name" value="ASCH"/>
    <property type="match status" value="1"/>
</dbReference>
<dbReference type="SUPFAM" id="SSF88697">
    <property type="entry name" value="PUA domain-like"/>
    <property type="match status" value="1"/>
</dbReference>
<reference key="1">
    <citation type="journal article" date="2008" name="J. Bacteriol.">
        <title>The pangenome structure of Escherichia coli: comparative genomic analysis of E. coli commensal and pathogenic isolates.</title>
        <authorList>
            <person name="Rasko D.A."/>
            <person name="Rosovitz M.J."/>
            <person name="Myers G.S.A."/>
            <person name="Mongodin E.F."/>
            <person name="Fricke W.F."/>
            <person name="Gajer P."/>
            <person name="Crabtree J."/>
            <person name="Sebaihia M."/>
            <person name="Thomson N.R."/>
            <person name="Chaudhuri R."/>
            <person name="Henderson I.R."/>
            <person name="Sperandio V."/>
            <person name="Ravel J."/>
        </authorList>
    </citation>
    <scope>NUCLEOTIDE SEQUENCE [LARGE SCALE GENOMIC DNA]</scope>
    <source>
        <strain>E24377A / ETEC</strain>
    </source>
</reference>
<feature type="chain" id="PRO_1000061982" description="N(4)-acetylcytidine amidohydrolase">
    <location>
        <begin position="1"/>
        <end position="103"/>
    </location>
</feature>
<feature type="domain" description="ASCH" evidence="1">
    <location>
        <begin position="6"/>
        <end position="101"/>
    </location>
</feature>
<feature type="active site" description="Proton acceptor" evidence="2">
    <location>
        <position position="21"/>
    </location>
</feature>
<feature type="active site" description="Nucleophile" evidence="2">
    <location>
        <position position="24"/>
    </location>
</feature>
<feature type="active site" description="Proton donor" evidence="2">
    <location>
        <position position="74"/>
    </location>
</feature>
<keyword id="KW-0378">Hydrolase</keyword>
<keyword id="KW-1185">Reference proteome</keyword>
<proteinExistence type="inferred from homology"/>
<gene>
    <name type="primary">yqfB</name>
    <name type="ordered locus">EcE24377A_3227</name>
</gene>
<comment type="function">
    <text evidence="2">Catalyzes the hydrolysis of N(4)-acetylcytidine (ac4C).</text>
</comment>
<comment type="catalytic activity">
    <reaction evidence="2">
        <text>N(4)-acetylcytidine + H2O = cytidine + acetate + H(+)</text>
        <dbReference type="Rhea" id="RHEA:62932"/>
        <dbReference type="ChEBI" id="CHEBI:15377"/>
        <dbReference type="ChEBI" id="CHEBI:15378"/>
        <dbReference type="ChEBI" id="CHEBI:17562"/>
        <dbReference type="ChEBI" id="CHEBI:30089"/>
        <dbReference type="ChEBI" id="CHEBI:70989"/>
        <dbReference type="EC" id="3.5.1.135"/>
    </reaction>
</comment>
<comment type="catalytic activity">
    <reaction evidence="2">
        <text>N(4)-acetyl-2'-deoxycytidine + H2O = 2'-deoxycytidine + acetate + H(+)</text>
        <dbReference type="Rhea" id="RHEA:62936"/>
        <dbReference type="ChEBI" id="CHEBI:15377"/>
        <dbReference type="ChEBI" id="CHEBI:15378"/>
        <dbReference type="ChEBI" id="CHEBI:15698"/>
        <dbReference type="ChEBI" id="CHEBI:30089"/>
        <dbReference type="ChEBI" id="CHEBI:146133"/>
        <dbReference type="EC" id="3.5.1.135"/>
    </reaction>
</comment>
<comment type="catalytic activity">
    <reaction evidence="2">
        <text>N(4)-acetylcytosine + H2O = cytosine + acetate + H(+)</text>
        <dbReference type="Rhea" id="RHEA:62940"/>
        <dbReference type="ChEBI" id="CHEBI:15377"/>
        <dbReference type="ChEBI" id="CHEBI:15378"/>
        <dbReference type="ChEBI" id="CHEBI:16040"/>
        <dbReference type="ChEBI" id="CHEBI:30089"/>
        <dbReference type="ChEBI" id="CHEBI:146134"/>
        <dbReference type="EC" id="3.5.1.135"/>
    </reaction>
</comment>
<comment type="similarity">
    <text evidence="2">Belongs to the N(4)-acetylcytidine amidohydrolase family.</text>
</comment>
<name>AC4CH_ECO24</name>
<accession>A7ZR09</accession>
<organism>
    <name type="scientific">Escherichia coli O139:H28 (strain E24377A / ETEC)</name>
    <dbReference type="NCBI Taxonomy" id="331111"/>
    <lineage>
        <taxon>Bacteria</taxon>
        <taxon>Pseudomonadati</taxon>
        <taxon>Pseudomonadota</taxon>
        <taxon>Gammaproteobacteria</taxon>
        <taxon>Enterobacterales</taxon>
        <taxon>Enterobacteriaceae</taxon>
        <taxon>Escherichia</taxon>
    </lineage>
</organism>
<evidence type="ECO:0000255" key="1"/>
<evidence type="ECO:0000255" key="2">
    <source>
        <dbReference type="HAMAP-Rule" id="MF_00684"/>
    </source>
</evidence>
<sequence length="103" mass="11890">MQPNDITFFQRFQDDILAGRKTITIRDESESHFKTGDVLRVGRFEDDGYFCTIEVTATSTVTLDTLTEKHAEQENMTLTELIKVIADIYPGQTQFYVIEFKCL</sequence>